<sequence>MPIKIPADLPAYDVLTREGVMVMDPDQAARQDIRPLRIGLLNLMPKKIQTENQFARLIGATPLQIELSLIRMSEHQTKNTAAEHMESFYRPFQDIKSEKFDGLIITGAPIEHLDFQDVTYWDELREVMDWTQTNVHSTFGVCWGGMAMINHFHGVRKHMLEAKAFGCFRHRNLAPASPYLRGFSDECVIPVSRWTEMRQSEIDAAEGLKTLLGSDQVGPCLVQDKAHRALYIFNHFEYDSETLKQEYDRDVAAGNQINVPLNYYPDDDPSRAPLNRWRSHAHLLYGNWLTEIYQDTPYDIDAIGR</sequence>
<proteinExistence type="inferred from homology"/>
<comment type="function">
    <text evidence="1">Transfers an acetyl group from acetyl-CoA to L-homoserine, forming acetyl-L-homoserine.</text>
</comment>
<comment type="catalytic activity">
    <reaction evidence="1">
        <text>L-homoserine + acetyl-CoA = O-acetyl-L-homoserine + CoA</text>
        <dbReference type="Rhea" id="RHEA:13701"/>
        <dbReference type="ChEBI" id="CHEBI:57287"/>
        <dbReference type="ChEBI" id="CHEBI:57288"/>
        <dbReference type="ChEBI" id="CHEBI:57476"/>
        <dbReference type="ChEBI" id="CHEBI:57716"/>
        <dbReference type="EC" id="2.3.1.31"/>
    </reaction>
</comment>
<comment type="pathway">
    <text evidence="1">Amino-acid biosynthesis; L-methionine biosynthesis via de novo pathway; O-acetyl-L-homoserine from L-homoserine: step 1/1.</text>
</comment>
<comment type="subcellular location">
    <subcellularLocation>
        <location evidence="1">Cytoplasm</location>
    </subcellularLocation>
</comment>
<comment type="similarity">
    <text evidence="1">Belongs to the MetA family.</text>
</comment>
<dbReference type="EC" id="2.3.1.31" evidence="1"/>
<dbReference type="EMBL" id="CP000362">
    <property type="protein sequence ID" value="ABG32315.1"/>
    <property type="molecule type" value="Genomic_DNA"/>
</dbReference>
<dbReference type="RefSeq" id="WP_011568931.1">
    <property type="nucleotide sequence ID" value="NC_008209.1"/>
</dbReference>
<dbReference type="SMR" id="Q165M8"/>
<dbReference type="STRING" id="375451.RD1_2784"/>
<dbReference type="KEGG" id="rde:RD1_2784"/>
<dbReference type="eggNOG" id="COG1897">
    <property type="taxonomic scope" value="Bacteria"/>
</dbReference>
<dbReference type="HOGENOM" id="CLU_057851_0_1_5"/>
<dbReference type="OrthoDB" id="9772423at2"/>
<dbReference type="UniPathway" id="UPA00051">
    <property type="reaction ID" value="UER00074"/>
</dbReference>
<dbReference type="Proteomes" id="UP000007029">
    <property type="component" value="Chromosome"/>
</dbReference>
<dbReference type="GO" id="GO:0005737">
    <property type="term" value="C:cytoplasm"/>
    <property type="evidence" value="ECO:0007669"/>
    <property type="project" value="UniProtKB-SubCell"/>
</dbReference>
<dbReference type="GO" id="GO:0004414">
    <property type="term" value="F:homoserine O-acetyltransferase activity"/>
    <property type="evidence" value="ECO:0007669"/>
    <property type="project" value="UniProtKB-EC"/>
</dbReference>
<dbReference type="GO" id="GO:0008899">
    <property type="term" value="F:homoserine O-succinyltransferase activity"/>
    <property type="evidence" value="ECO:0007669"/>
    <property type="project" value="UniProtKB-UniRule"/>
</dbReference>
<dbReference type="GO" id="GO:0019281">
    <property type="term" value="P:L-methionine biosynthetic process from homoserine via O-succinyl-L-homoserine and cystathionine"/>
    <property type="evidence" value="ECO:0007669"/>
    <property type="project" value="InterPro"/>
</dbReference>
<dbReference type="CDD" id="cd03131">
    <property type="entry name" value="GATase1_HTS"/>
    <property type="match status" value="1"/>
</dbReference>
<dbReference type="Gene3D" id="3.40.50.880">
    <property type="match status" value="1"/>
</dbReference>
<dbReference type="HAMAP" id="MF_00295">
    <property type="entry name" value="MetA_acyltransf"/>
    <property type="match status" value="1"/>
</dbReference>
<dbReference type="InterPro" id="IPR029062">
    <property type="entry name" value="Class_I_gatase-like"/>
</dbReference>
<dbReference type="InterPro" id="IPR005697">
    <property type="entry name" value="HST_MetA"/>
</dbReference>
<dbReference type="InterPro" id="IPR033752">
    <property type="entry name" value="MetA_family"/>
</dbReference>
<dbReference type="NCBIfam" id="TIGR01001">
    <property type="entry name" value="metA"/>
    <property type="match status" value="1"/>
</dbReference>
<dbReference type="PANTHER" id="PTHR20919">
    <property type="entry name" value="HOMOSERINE O-SUCCINYLTRANSFERASE"/>
    <property type="match status" value="1"/>
</dbReference>
<dbReference type="PANTHER" id="PTHR20919:SF0">
    <property type="entry name" value="HOMOSERINE O-SUCCINYLTRANSFERASE"/>
    <property type="match status" value="1"/>
</dbReference>
<dbReference type="Pfam" id="PF04204">
    <property type="entry name" value="HTS"/>
    <property type="match status" value="1"/>
</dbReference>
<dbReference type="PIRSF" id="PIRSF000450">
    <property type="entry name" value="H_ser_succinyltr"/>
    <property type="match status" value="1"/>
</dbReference>
<dbReference type="SUPFAM" id="SSF52317">
    <property type="entry name" value="Class I glutamine amidotransferase-like"/>
    <property type="match status" value="1"/>
</dbReference>
<organism>
    <name type="scientific">Roseobacter denitrificans (strain ATCC 33942 / OCh 114)</name>
    <name type="common">Erythrobacter sp. (strain OCh 114)</name>
    <name type="synonym">Roseobacter denitrificans</name>
    <dbReference type="NCBI Taxonomy" id="375451"/>
    <lineage>
        <taxon>Bacteria</taxon>
        <taxon>Pseudomonadati</taxon>
        <taxon>Pseudomonadota</taxon>
        <taxon>Alphaproteobacteria</taxon>
        <taxon>Rhodobacterales</taxon>
        <taxon>Roseobacteraceae</taxon>
        <taxon>Roseobacter</taxon>
    </lineage>
</organism>
<keyword id="KW-0012">Acyltransferase</keyword>
<keyword id="KW-0028">Amino-acid biosynthesis</keyword>
<keyword id="KW-0963">Cytoplasm</keyword>
<keyword id="KW-0486">Methionine biosynthesis</keyword>
<keyword id="KW-1185">Reference proteome</keyword>
<keyword id="KW-0808">Transferase</keyword>
<gene>
    <name evidence="1" type="primary">metAA</name>
    <name type="ordered locus">RD1_2784</name>
</gene>
<accession>Q165M8</accession>
<feature type="chain" id="PRO_1000021829" description="Homoserine O-acetyltransferase">
    <location>
        <begin position="1"/>
        <end position="305"/>
    </location>
</feature>
<feature type="active site" description="Acyl-thioester intermediate" evidence="1">
    <location>
        <position position="142"/>
    </location>
</feature>
<feature type="active site" description="Proton acceptor" evidence="1">
    <location>
        <position position="235"/>
    </location>
</feature>
<feature type="active site" evidence="1">
    <location>
        <position position="237"/>
    </location>
</feature>
<feature type="binding site" evidence="1">
    <location>
        <position position="163"/>
    </location>
    <ligand>
        <name>substrate</name>
    </ligand>
</feature>
<feature type="binding site" evidence="1">
    <location>
        <position position="192"/>
    </location>
    <ligand>
        <name>substrate</name>
    </ligand>
</feature>
<feature type="binding site" evidence="1">
    <location>
        <position position="249"/>
    </location>
    <ligand>
        <name>substrate</name>
    </ligand>
</feature>
<feature type="site" description="Important for acyl-CoA specificity" evidence="1">
    <location>
        <position position="111"/>
    </location>
</feature>
<feature type="site" description="Important for substrate specificity" evidence="1">
    <location>
        <position position="192"/>
    </location>
</feature>
<protein>
    <recommendedName>
        <fullName evidence="1">Homoserine O-acetyltransferase</fullName>
        <shortName evidence="1">HAT</shortName>
        <ecNumber evidence="1">2.3.1.31</ecNumber>
    </recommendedName>
    <alternativeName>
        <fullName evidence="1">Homoserine transacetylase</fullName>
        <shortName evidence="1">HTA</shortName>
    </alternativeName>
</protein>
<name>METAA_ROSDO</name>
<reference key="1">
    <citation type="journal article" date="2007" name="J. Bacteriol.">
        <title>The complete genome sequence of Roseobacter denitrificans reveals a mixotrophic rather than photosynthetic metabolism.</title>
        <authorList>
            <person name="Swingley W.D."/>
            <person name="Sadekar S."/>
            <person name="Mastrian S.D."/>
            <person name="Matthies H.J."/>
            <person name="Hao J."/>
            <person name="Ramos H."/>
            <person name="Acharya C.R."/>
            <person name="Conrad A.L."/>
            <person name="Taylor H.L."/>
            <person name="Dejesa L.C."/>
            <person name="Shah M.K."/>
            <person name="O'Huallachain M.E."/>
            <person name="Lince M.T."/>
            <person name="Blankenship R.E."/>
            <person name="Beatty J.T."/>
            <person name="Touchman J.W."/>
        </authorList>
    </citation>
    <scope>NUCLEOTIDE SEQUENCE [LARGE SCALE GENOMIC DNA]</scope>
    <source>
        <strain>ATCC 33942 / OCh 114</strain>
    </source>
</reference>
<evidence type="ECO:0000255" key="1">
    <source>
        <dbReference type="HAMAP-Rule" id="MF_00295"/>
    </source>
</evidence>